<accession>A1ALX3</accession>
<dbReference type="EC" id="2.4.2.18" evidence="1"/>
<dbReference type="EMBL" id="CP000482">
    <property type="protein sequence ID" value="ABK98343.1"/>
    <property type="molecule type" value="Genomic_DNA"/>
</dbReference>
<dbReference type="RefSeq" id="WP_011734655.1">
    <property type="nucleotide sequence ID" value="NC_008609.1"/>
</dbReference>
<dbReference type="SMR" id="A1ALX3"/>
<dbReference type="STRING" id="338966.Ppro_0712"/>
<dbReference type="KEGG" id="ppd:Ppro_0712"/>
<dbReference type="eggNOG" id="COG0547">
    <property type="taxonomic scope" value="Bacteria"/>
</dbReference>
<dbReference type="HOGENOM" id="CLU_034315_2_1_7"/>
<dbReference type="OrthoDB" id="9806430at2"/>
<dbReference type="UniPathway" id="UPA00035">
    <property type="reaction ID" value="UER00041"/>
</dbReference>
<dbReference type="Proteomes" id="UP000006732">
    <property type="component" value="Chromosome"/>
</dbReference>
<dbReference type="GO" id="GO:0005829">
    <property type="term" value="C:cytosol"/>
    <property type="evidence" value="ECO:0007669"/>
    <property type="project" value="TreeGrafter"/>
</dbReference>
<dbReference type="GO" id="GO:0004048">
    <property type="term" value="F:anthranilate phosphoribosyltransferase activity"/>
    <property type="evidence" value="ECO:0007669"/>
    <property type="project" value="UniProtKB-UniRule"/>
</dbReference>
<dbReference type="GO" id="GO:0000287">
    <property type="term" value="F:magnesium ion binding"/>
    <property type="evidence" value="ECO:0007669"/>
    <property type="project" value="UniProtKB-UniRule"/>
</dbReference>
<dbReference type="GO" id="GO:0000162">
    <property type="term" value="P:L-tryptophan biosynthetic process"/>
    <property type="evidence" value="ECO:0007669"/>
    <property type="project" value="UniProtKB-UniRule"/>
</dbReference>
<dbReference type="FunFam" id="1.20.970.10:FF:000006">
    <property type="entry name" value="Anthranilate phosphoribosyltransferase"/>
    <property type="match status" value="1"/>
</dbReference>
<dbReference type="FunFam" id="3.40.1030.10:FF:000002">
    <property type="entry name" value="Anthranilate phosphoribosyltransferase"/>
    <property type="match status" value="1"/>
</dbReference>
<dbReference type="Gene3D" id="3.40.1030.10">
    <property type="entry name" value="Nucleoside phosphorylase/phosphoribosyltransferase catalytic domain"/>
    <property type="match status" value="1"/>
</dbReference>
<dbReference type="Gene3D" id="1.20.970.10">
    <property type="entry name" value="Transferase, Pyrimidine Nucleoside Phosphorylase, Chain C"/>
    <property type="match status" value="1"/>
</dbReference>
<dbReference type="HAMAP" id="MF_00211">
    <property type="entry name" value="TrpD"/>
    <property type="match status" value="1"/>
</dbReference>
<dbReference type="InterPro" id="IPR005940">
    <property type="entry name" value="Anthranilate_Pribosyl_Tfrase"/>
</dbReference>
<dbReference type="InterPro" id="IPR000312">
    <property type="entry name" value="Glycosyl_Trfase_fam3"/>
</dbReference>
<dbReference type="InterPro" id="IPR017459">
    <property type="entry name" value="Glycosyl_Trfase_fam3_N_dom"/>
</dbReference>
<dbReference type="InterPro" id="IPR036320">
    <property type="entry name" value="Glycosyl_Trfase_fam3_N_dom_sf"/>
</dbReference>
<dbReference type="InterPro" id="IPR035902">
    <property type="entry name" value="Nuc_phospho_transferase"/>
</dbReference>
<dbReference type="NCBIfam" id="TIGR01245">
    <property type="entry name" value="trpD"/>
    <property type="match status" value="1"/>
</dbReference>
<dbReference type="PANTHER" id="PTHR43285">
    <property type="entry name" value="ANTHRANILATE PHOSPHORIBOSYLTRANSFERASE"/>
    <property type="match status" value="1"/>
</dbReference>
<dbReference type="PANTHER" id="PTHR43285:SF2">
    <property type="entry name" value="ANTHRANILATE PHOSPHORIBOSYLTRANSFERASE"/>
    <property type="match status" value="1"/>
</dbReference>
<dbReference type="Pfam" id="PF02885">
    <property type="entry name" value="Glycos_trans_3N"/>
    <property type="match status" value="1"/>
</dbReference>
<dbReference type="Pfam" id="PF00591">
    <property type="entry name" value="Glycos_transf_3"/>
    <property type="match status" value="1"/>
</dbReference>
<dbReference type="SUPFAM" id="SSF52418">
    <property type="entry name" value="Nucleoside phosphorylase/phosphoribosyltransferase catalytic domain"/>
    <property type="match status" value="1"/>
</dbReference>
<dbReference type="SUPFAM" id="SSF47648">
    <property type="entry name" value="Nucleoside phosphorylase/phosphoribosyltransferase N-terminal domain"/>
    <property type="match status" value="1"/>
</dbReference>
<name>TRPD_PELPD</name>
<protein>
    <recommendedName>
        <fullName evidence="1">Anthranilate phosphoribosyltransferase</fullName>
        <ecNumber evidence="1">2.4.2.18</ecNumber>
    </recommendedName>
</protein>
<organism>
    <name type="scientific">Pelobacter propionicus (strain DSM 2379 / NBRC 103807 / OttBd1)</name>
    <dbReference type="NCBI Taxonomy" id="338966"/>
    <lineage>
        <taxon>Bacteria</taxon>
        <taxon>Pseudomonadati</taxon>
        <taxon>Thermodesulfobacteriota</taxon>
        <taxon>Desulfuromonadia</taxon>
        <taxon>Desulfuromonadales</taxon>
        <taxon>Desulfuromonadaceae</taxon>
        <taxon>Pelobacter</taxon>
    </lineage>
</organism>
<sequence>MIKKAIARIVEQKDLTEGEMIEVMGQIMTGEATPAQIGAFITALRMKGETIDEITGAARVMREHATRIRAGKDLLDIDRDDINIDRETILDVVGTGGDGTNTFNVSTTVAFVVSACGVKVAKHGNRSVSSLCGSADVLEKLGVNLDITPETVEQCITKIGIGFLFAPALHGAMRYAIGPRREIGIRTIFNILGPLTNPAGADCQVMGVYRPGLVEKLAGVLHRLGCRHGFVVHGMDGMDEITTTTETLIAEVTTSGVSICTIHPEELGFSRCSMDELRGGDATANADIVRSVLQGVAGPRRDIVLINAAYALVAADRAATPEQAIALAAEAIDSGRAMEQLRKLIQITKD</sequence>
<keyword id="KW-0028">Amino-acid biosynthesis</keyword>
<keyword id="KW-0057">Aromatic amino acid biosynthesis</keyword>
<keyword id="KW-0328">Glycosyltransferase</keyword>
<keyword id="KW-0460">Magnesium</keyword>
<keyword id="KW-0479">Metal-binding</keyword>
<keyword id="KW-1185">Reference proteome</keyword>
<keyword id="KW-0808">Transferase</keyword>
<keyword id="KW-0822">Tryptophan biosynthesis</keyword>
<feature type="chain" id="PRO_1000043042" description="Anthranilate phosphoribosyltransferase">
    <location>
        <begin position="1"/>
        <end position="350"/>
    </location>
</feature>
<feature type="binding site" evidence="1">
    <location>
        <position position="94"/>
    </location>
    <ligand>
        <name>5-phospho-alpha-D-ribose 1-diphosphate</name>
        <dbReference type="ChEBI" id="CHEBI:58017"/>
    </ligand>
</feature>
<feature type="binding site" evidence="1">
    <location>
        <position position="94"/>
    </location>
    <ligand>
        <name>anthranilate</name>
        <dbReference type="ChEBI" id="CHEBI:16567"/>
        <label>1</label>
    </ligand>
</feature>
<feature type="binding site" evidence="1">
    <location>
        <begin position="97"/>
        <end position="98"/>
    </location>
    <ligand>
        <name>5-phospho-alpha-D-ribose 1-diphosphate</name>
        <dbReference type="ChEBI" id="CHEBI:58017"/>
    </ligand>
</feature>
<feature type="binding site" evidence="1">
    <location>
        <position position="102"/>
    </location>
    <ligand>
        <name>5-phospho-alpha-D-ribose 1-diphosphate</name>
        <dbReference type="ChEBI" id="CHEBI:58017"/>
    </ligand>
</feature>
<feature type="binding site" evidence="1">
    <location>
        <begin position="104"/>
        <end position="107"/>
    </location>
    <ligand>
        <name>5-phospho-alpha-D-ribose 1-diphosphate</name>
        <dbReference type="ChEBI" id="CHEBI:58017"/>
    </ligand>
</feature>
<feature type="binding site" evidence="1">
    <location>
        <position position="106"/>
    </location>
    <ligand>
        <name>Mg(2+)</name>
        <dbReference type="ChEBI" id="CHEBI:18420"/>
        <label>1</label>
    </ligand>
</feature>
<feature type="binding site" evidence="1">
    <location>
        <begin position="122"/>
        <end position="130"/>
    </location>
    <ligand>
        <name>5-phospho-alpha-D-ribose 1-diphosphate</name>
        <dbReference type="ChEBI" id="CHEBI:58017"/>
    </ligand>
</feature>
<feature type="binding site" evidence="1">
    <location>
        <position position="125"/>
    </location>
    <ligand>
        <name>anthranilate</name>
        <dbReference type="ChEBI" id="CHEBI:16567"/>
        <label>1</label>
    </ligand>
</feature>
<feature type="binding site" evidence="1">
    <location>
        <position position="134"/>
    </location>
    <ligand>
        <name>5-phospho-alpha-D-ribose 1-diphosphate</name>
        <dbReference type="ChEBI" id="CHEBI:58017"/>
    </ligand>
</feature>
<feature type="binding site" evidence="1">
    <location>
        <position position="180"/>
    </location>
    <ligand>
        <name>anthranilate</name>
        <dbReference type="ChEBI" id="CHEBI:16567"/>
        <label>2</label>
    </ligand>
</feature>
<feature type="binding site" evidence="1">
    <location>
        <position position="239"/>
    </location>
    <ligand>
        <name>Mg(2+)</name>
        <dbReference type="ChEBI" id="CHEBI:18420"/>
        <label>2</label>
    </ligand>
</feature>
<feature type="binding site" evidence="1">
    <location>
        <position position="240"/>
    </location>
    <ligand>
        <name>Mg(2+)</name>
        <dbReference type="ChEBI" id="CHEBI:18420"/>
        <label>1</label>
    </ligand>
</feature>
<feature type="binding site" evidence="1">
    <location>
        <position position="240"/>
    </location>
    <ligand>
        <name>Mg(2+)</name>
        <dbReference type="ChEBI" id="CHEBI:18420"/>
        <label>2</label>
    </ligand>
</feature>
<evidence type="ECO:0000255" key="1">
    <source>
        <dbReference type="HAMAP-Rule" id="MF_00211"/>
    </source>
</evidence>
<comment type="function">
    <text evidence="1">Catalyzes the transfer of the phosphoribosyl group of 5-phosphorylribose-1-pyrophosphate (PRPP) to anthranilate to yield N-(5'-phosphoribosyl)-anthranilate (PRA).</text>
</comment>
<comment type="catalytic activity">
    <reaction evidence="1">
        <text>N-(5-phospho-beta-D-ribosyl)anthranilate + diphosphate = 5-phospho-alpha-D-ribose 1-diphosphate + anthranilate</text>
        <dbReference type="Rhea" id="RHEA:11768"/>
        <dbReference type="ChEBI" id="CHEBI:16567"/>
        <dbReference type="ChEBI" id="CHEBI:18277"/>
        <dbReference type="ChEBI" id="CHEBI:33019"/>
        <dbReference type="ChEBI" id="CHEBI:58017"/>
        <dbReference type="EC" id="2.4.2.18"/>
    </reaction>
</comment>
<comment type="cofactor">
    <cofactor evidence="1">
        <name>Mg(2+)</name>
        <dbReference type="ChEBI" id="CHEBI:18420"/>
    </cofactor>
    <text evidence="1">Binds 2 magnesium ions per monomer.</text>
</comment>
<comment type="pathway">
    <text evidence="1">Amino-acid biosynthesis; L-tryptophan biosynthesis; L-tryptophan from chorismate: step 2/5.</text>
</comment>
<comment type="subunit">
    <text evidence="1">Homodimer.</text>
</comment>
<comment type="similarity">
    <text evidence="1">Belongs to the anthranilate phosphoribosyltransferase family.</text>
</comment>
<proteinExistence type="inferred from homology"/>
<reference key="1">
    <citation type="submission" date="2006-10" db="EMBL/GenBank/DDBJ databases">
        <title>Complete sequence of chromosome of Pelobacter propionicus DSM 2379.</title>
        <authorList>
            <consortium name="US DOE Joint Genome Institute"/>
            <person name="Copeland A."/>
            <person name="Lucas S."/>
            <person name="Lapidus A."/>
            <person name="Barry K."/>
            <person name="Detter J.C."/>
            <person name="Glavina del Rio T."/>
            <person name="Hammon N."/>
            <person name="Israni S."/>
            <person name="Dalin E."/>
            <person name="Tice H."/>
            <person name="Pitluck S."/>
            <person name="Saunders E."/>
            <person name="Brettin T."/>
            <person name="Bruce D."/>
            <person name="Han C."/>
            <person name="Tapia R."/>
            <person name="Schmutz J."/>
            <person name="Larimer F."/>
            <person name="Land M."/>
            <person name="Hauser L."/>
            <person name="Kyrpides N."/>
            <person name="Kim E."/>
            <person name="Lovley D."/>
            <person name="Richardson P."/>
        </authorList>
    </citation>
    <scope>NUCLEOTIDE SEQUENCE [LARGE SCALE GENOMIC DNA]</scope>
    <source>
        <strain>DSM 2379 / NBRC 103807 / OttBd1</strain>
    </source>
</reference>
<gene>
    <name evidence="1" type="primary">trpD</name>
    <name type="ordered locus">Ppro_0712</name>
</gene>